<gene>
    <name type="ORF">DDB_G0287407</name>
</gene>
<organism>
    <name type="scientific">Dictyostelium discoideum</name>
    <name type="common">Social amoeba</name>
    <dbReference type="NCBI Taxonomy" id="44689"/>
    <lineage>
        <taxon>Eukaryota</taxon>
        <taxon>Amoebozoa</taxon>
        <taxon>Evosea</taxon>
        <taxon>Eumycetozoa</taxon>
        <taxon>Dictyostelia</taxon>
        <taxon>Dictyosteliales</taxon>
        <taxon>Dictyosteliaceae</taxon>
        <taxon>Dictyostelium</taxon>
    </lineage>
</organism>
<reference key="1">
    <citation type="journal article" date="2005" name="Nature">
        <title>The genome of the social amoeba Dictyostelium discoideum.</title>
        <authorList>
            <person name="Eichinger L."/>
            <person name="Pachebat J.A."/>
            <person name="Gloeckner G."/>
            <person name="Rajandream M.A."/>
            <person name="Sucgang R."/>
            <person name="Berriman M."/>
            <person name="Song J."/>
            <person name="Olsen R."/>
            <person name="Szafranski K."/>
            <person name="Xu Q."/>
            <person name="Tunggal B."/>
            <person name="Kummerfeld S."/>
            <person name="Madera M."/>
            <person name="Konfortov B.A."/>
            <person name="Rivero F."/>
            <person name="Bankier A.T."/>
            <person name="Lehmann R."/>
            <person name="Hamlin N."/>
            <person name="Davies R."/>
            <person name="Gaudet P."/>
            <person name="Fey P."/>
            <person name="Pilcher K."/>
            <person name="Chen G."/>
            <person name="Saunders D."/>
            <person name="Sodergren E.J."/>
            <person name="Davis P."/>
            <person name="Kerhornou A."/>
            <person name="Nie X."/>
            <person name="Hall N."/>
            <person name="Anjard C."/>
            <person name="Hemphill L."/>
            <person name="Bason N."/>
            <person name="Farbrother P."/>
            <person name="Desany B."/>
            <person name="Just E."/>
            <person name="Morio T."/>
            <person name="Rost R."/>
            <person name="Churcher C.M."/>
            <person name="Cooper J."/>
            <person name="Haydock S."/>
            <person name="van Driessche N."/>
            <person name="Cronin A."/>
            <person name="Goodhead I."/>
            <person name="Muzny D.M."/>
            <person name="Mourier T."/>
            <person name="Pain A."/>
            <person name="Lu M."/>
            <person name="Harper D."/>
            <person name="Lindsay R."/>
            <person name="Hauser H."/>
            <person name="James K.D."/>
            <person name="Quiles M."/>
            <person name="Madan Babu M."/>
            <person name="Saito T."/>
            <person name="Buchrieser C."/>
            <person name="Wardroper A."/>
            <person name="Felder M."/>
            <person name="Thangavelu M."/>
            <person name="Johnson D."/>
            <person name="Knights A."/>
            <person name="Loulseged H."/>
            <person name="Mungall K.L."/>
            <person name="Oliver K."/>
            <person name="Price C."/>
            <person name="Quail M.A."/>
            <person name="Urushihara H."/>
            <person name="Hernandez J."/>
            <person name="Rabbinowitsch E."/>
            <person name="Steffen D."/>
            <person name="Sanders M."/>
            <person name="Ma J."/>
            <person name="Kohara Y."/>
            <person name="Sharp S."/>
            <person name="Simmonds M.N."/>
            <person name="Spiegler S."/>
            <person name="Tivey A."/>
            <person name="Sugano S."/>
            <person name="White B."/>
            <person name="Walker D."/>
            <person name="Woodward J.R."/>
            <person name="Winckler T."/>
            <person name="Tanaka Y."/>
            <person name="Shaulsky G."/>
            <person name="Schleicher M."/>
            <person name="Weinstock G.M."/>
            <person name="Rosenthal A."/>
            <person name="Cox E.C."/>
            <person name="Chisholm R.L."/>
            <person name="Gibbs R.A."/>
            <person name="Loomis W.F."/>
            <person name="Platzer M."/>
            <person name="Kay R.R."/>
            <person name="Williams J.G."/>
            <person name="Dear P.H."/>
            <person name="Noegel A.A."/>
            <person name="Barrell B.G."/>
            <person name="Kuspa A."/>
        </authorList>
    </citation>
    <scope>NUCLEOTIDE SEQUENCE [LARGE SCALE GENOMIC DNA]</scope>
    <source>
        <strain>AX4</strain>
    </source>
</reference>
<sequence>MKNIFKDKNIYILSVENDQRDKCKSYLISKKALVEKRFSKKVNIIITSEKTILENKFPVNTATKLGIEIIDYETLSRDIERFIRKTQPTSSNGSTSTTTTTTTTTQKGQIVSFKPTSSTSTTTNVINTTTTSTTSTTTIVDPIISLIVPPSGSNNGSFQIAIFGIGFLAGAGFRIKIGNDNGGGGVFASNYEFHSSTSVLCTIPNLNIKCGQQPIYASNDGGKTFGFPIQFLFFDTSIHRIPTAREQDGMVLKSQLDNLKRAISNIQTMESILMRRISLLNGNHDDSKSIEQIFIQQQNFIESGASQLLLGNGGTTDQLLQSLEGSEYSSTNDDGENDQSDDDDDNEDDDDFVEKNSNQVKEEFSEREIKIFISSPFKDMQLDRDQIVKVVIPRIRKLCIERDIVLSYVDLRWGVTSNQSEQSTGLSMCLKELEKCNILIGLFGERYGWSSQEKQDPKSQQLLQSTLDRAIQDFPWVKNYRDSSITEIEFRMLLNQRQQQRNGFFYFRDPYYLEEVSQMDKNNFVSEGQRSKEKLEKLKQEIIKSPFKSSEYRRPTNLSDVLYEDLEKYIDKKYPSGNCELKGFEKERFLHSVFIKNLTKIYITNENYFMEIDTYLSGSATSSGSGNKSISIGSSINSGLLSSLKNKPVFLIQGESGSGKSSLISNWLKQHKEQHPEDLVVSHWIGASPSSNKFTSILIRIMNEIKNQIEIDQKIANGGSNSSSSSSSSMFSTTSTSSVSWLPEIPDETFESEKIVSEFPQFLQYVMSHPSLNGKRLVLLIDGLDKLDPRENSQELIWFPRNFPHNVKVIVSSIQGSRQSEVLKKRGSHILSILPFTEAERKSMVRLYLQKYAKKLSDQQEIAIAISKSTTNPRFLQLLLDDILVFGDYERLNDRIKTLLRAKNTSELYEIILDRIEKDYDPKAKGLVSEFLKYIWAGRRGVEMSMLSTLLLKKNIDPAEWGSLLVLMEAYITSSSGVISFLNDDISKAVEKKYITTPKIGIEIHTNLAEAFEQSGDLNERKVEEYPYQLLKSENWESLKNTLTNLYVFDKLYTPNHKVDLINYWNVLEKQTKPPKNAAERDDPIPYNCSNEFKAIISRSFIQASGLVISDVWFRVASFLEELSQFDGAEVLYNKCRELYINNSQNIEAAKVDRAMGRMYLTMGQNDKSDSKFRLALSIYTKERGQEDIEVAITLNLLGTLATNRCKFDEAKQILNQAMNICESKYESNVLLIADIAYSLGSVCFVEPNRKLEVAEAYFARSLELTESKVGDMDVAYARILTRLGSLNIEKDTYADAEAFFKAALKIYEARLGIDHSRVSQILRHMISLYEVQENYKMAEQCCIRALAITKKIYGNSHNLVSATQIRQALLYNSMNRKQDCLNLLNEVKVTREKEFGPDHKQVKHIIDLIKEIDKPIVPKAPPPPPPSSSSPSASSLLMKSITSLPIVNGQAVLSVPKPPVSRGPNGIPIPPPPPPTIKLYTNMVSLQSVMKQNVGRIPVAQPTSFNSPVQPPSPRTQQAIQQGQQQRQQVQQQQQQVQQQMSQKVSSLQQQPQQQQQQQPSQGYGNRQNTPLFQQPIFQQQFQQNRIQQPQQQPQQQAYVGDMLAQFDQQKLKRVQNANDRSGASQIVENLIGKKKCSKPVSLVNKGYMEESNQIDMGALFD</sequence>
<name>Y7407_DICDI</name>
<protein>
    <recommendedName>
        <fullName>TPR repeat-containing protein DDB_G0287407</fullName>
    </recommendedName>
</protein>
<dbReference type="EMBL" id="AAFI02000100">
    <property type="protein sequence ID" value="EAL63771.1"/>
    <property type="molecule type" value="Genomic_DNA"/>
</dbReference>
<dbReference type="RefSeq" id="XP_637293.1">
    <property type="nucleotide sequence ID" value="XM_632201.1"/>
</dbReference>
<dbReference type="SMR" id="Q54KD0"/>
<dbReference type="STRING" id="44689.Q54KD0"/>
<dbReference type="PaxDb" id="44689-DDB0232091"/>
<dbReference type="EnsemblProtists" id="EAL63771">
    <property type="protein sequence ID" value="EAL63771"/>
    <property type="gene ID" value="DDB_G0287407"/>
</dbReference>
<dbReference type="GeneID" id="8626125"/>
<dbReference type="KEGG" id="ddi:DDB_G0287407"/>
<dbReference type="dictyBase" id="DDB_G0287407"/>
<dbReference type="VEuPathDB" id="AmoebaDB:DDB_G0287407"/>
<dbReference type="eggNOG" id="KOG1840">
    <property type="taxonomic scope" value="Eukaryota"/>
</dbReference>
<dbReference type="eggNOG" id="KOG3602">
    <property type="taxonomic scope" value="Eukaryota"/>
</dbReference>
<dbReference type="HOGENOM" id="CLU_242088_0_0_1"/>
<dbReference type="InParanoid" id="Q54KD0"/>
<dbReference type="OMA" id="YFRDPYY"/>
<dbReference type="PhylomeDB" id="Q54KD0"/>
<dbReference type="PRO" id="PR:Q54KD0"/>
<dbReference type="Proteomes" id="UP000002195">
    <property type="component" value="Chromosome 5"/>
</dbReference>
<dbReference type="GO" id="GO:0080008">
    <property type="term" value="C:Cul4-RING E3 ubiquitin ligase complex"/>
    <property type="evidence" value="ECO:0000318"/>
    <property type="project" value="GO_Central"/>
</dbReference>
<dbReference type="CDD" id="cd00102">
    <property type="entry name" value="IPT"/>
    <property type="match status" value="1"/>
</dbReference>
<dbReference type="Gene3D" id="3.40.50.300">
    <property type="entry name" value="P-loop containing nucleotide triphosphate hydrolases"/>
    <property type="match status" value="1"/>
</dbReference>
<dbReference type="Gene3D" id="1.25.40.10">
    <property type="entry name" value="Tetratricopeptide repeat domain"/>
    <property type="match status" value="2"/>
</dbReference>
<dbReference type="InterPro" id="IPR041664">
    <property type="entry name" value="AAA_16"/>
</dbReference>
<dbReference type="InterPro" id="IPR051191">
    <property type="entry name" value="DCAF12"/>
</dbReference>
<dbReference type="InterPro" id="IPR025139">
    <property type="entry name" value="DUF4062"/>
</dbReference>
<dbReference type="InterPro" id="IPR014756">
    <property type="entry name" value="Ig_E-set"/>
</dbReference>
<dbReference type="InterPro" id="IPR027417">
    <property type="entry name" value="P-loop_NTPase"/>
</dbReference>
<dbReference type="InterPro" id="IPR011990">
    <property type="entry name" value="TPR-like_helical_dom_sf"/>
</dbReference>
<dbReference type="InterPro" id="IPR019734">
    <property type="entry name" value="TPR_rpt"/>
</dbReference>
<dbReference type="PANTHER" id="PTHR19860">
    <property type="entry name" value="DDB1- AND CUL4-ASSOCIATED FACTOR 12-RELATED"/>
    <property type="match status" value="1"/>
</dbReference>
<dbReference type="PANTHER" id="PTHR19860:SF24">
    <property type="entry name" value="TPR REPEAT-CONTAINING PROTEIN DDB_G0287407"/>
    <property type="match status" value="1"/>
</dbReference>
<dbReference type="Pfam" id="PF13191">
    <property type="entry name" value="AAA_16"/>
    <property type="match status" value="1"/>
</dbReference>
<dbReference type="Pfam" id="PF13271">
    <property type="entry name" value="DUF4062"/>
    <property type="match status" value="1"/>
</dbReference>
<dbReference type="Pfam" id="PF13374">
    <property type="entry name" value="TPR_10"/>
    <property type="match status" value="1"/>
</dbReference>
<dbReference type="Pfam" id="PF13424">
    <property type="entry name" value="TPR_12"/>
    <property type="match status" value="1"/>
</dbReference>
<dbReference type="SMART" id="SM00028">
    <property type="entry name" value="TPR"/>
    <property type="match status" value="5"/>
</dbReference>
<dbReference type="SUPFAM" id="SSF81296">
    <property type="entry name" value="E set domains"/>
    <property type="match status" value="1"/>
</dbReference>
<dbReference type="SUPFAM" id="SSF52540">
    <property type="entry name" value="P-loop containing nucleoside triphosphate hydrolases"/>
    <property type="match status" value="1"/>
</dbReference>
<dbReference type="SUPFAM" id="SSF48452">
    <property type="entry name" value="TPR-like"/>
    <property type="match status" value="2"/>
</dbReference>
<dbReference type="PROSITE" id="PS50293">
    <property type="entry name" value="TPR_REGION"/>
    <property type="match status" value="1"/>
</dbReference>
<proteinExistence type="predicted"/>
<evidence type="ECO:0000255" key="1"/>
<evidence type="ECO:0000256" key="2">
    <source>
        <dbReference type="SAM" id="MobiDB-lite"/>
    </source>
</evidence>
<feature type="chain" id="PRO_0000389243" description="TPR repeat-containing protein DDB_G0287407">
    <location>
        <begin position="1"/>
        <end position="1663"/>
    </location>
</feature>
<feature type="repeat" description="TPR 1">
    <location>
        <begin position="1110"/>
        <end position="1143"/>
    </location>
</feature>
<feature type="repeat" description="TPR 2">
    <location>
        <begin position="1150"/>
        <end position="1183"/>
    </location>
</feature>
<feature type="repeat" description="TPR 3">
    <location>
        <begin position="1192"/>
        <end position="1225"/>
    </location>
</feature>
<feature type="repeat" description="TPR 4">
    <location>
        <begin position="1234"/>
        <end position="1269"/>
    </location>
</feature>
<feature type="repeat" description="TPR 5">
    <location>
        <begin position="1278"/>
        <end position="1311"/>
    </location>
</feature>
<feature type="repeat" description="TPR 6">
    <location>
        <begin position="1320"/>
        <end position="1353"/>
    </location>
</feature>
<feature type="region of interest" description="Disordered" evidence="2">
    <location>
        <begin position="84"/>
        <end position="109"/>
    </location>
</feature>
<feature type="region of interest" description="Disordered" evidence="2">
    <location>
        <begin position="326"/>
        <end position="359"/>
    </location>
</feature>
<feature type="region of interest" description="Disordered" evidence="2">
    <location>
        <begin position="1500"/>
        <end position="1528"/>
    </location>
</feature>
<feature type="region of interest" description="Disordered" evidence="2">
    <location>
        <begin position="1544"/>
        <end position="1571"/>
    </location>
</feature>
<feature type="coiled-coil region" evidence="1">
    <location>
        <begin position="1516"/>
        <end position="1547"/>
    </location>
</feature>
<feature type="compositionally biased region" description="Low complexity" evidence="2">
    <location>
        <begin position="89"/>
        <end position="105"/>
    </location>
</feature>
<feature type="compositionally biased region" description="Acidic residues" evidence="2">
    <location>
        <begin position="333"/>
        <end position="352"/>
    </location>
</feature>
<feature type="compositionally biased region" description="Low complexity" evidence="2">
    <location>
        <begin position="1518"/>
        <end position="1528"/>
    </location>
</feature>
<feature type="compositionally biased region" description="Low complexity" evidence="2">
    <location>
        <begin position="1544"/>
        <end position="1563"/>
    </location>
</feature>
<accession>Q54KD0</accession>
<keyword id="KW-0175">Coiled coil</keyword>
<keyword id="KW-1185">Reference proteome</keyword>
<keyword id="KW-0677">Repeat</keyword>
<keyword id="KW-0802">TPR repeat</keyword>